<gene>
    <name type="primary">TFRC</name>
</gene>
<accession>Q9MYZ3</accession>
<sequence length="769" mass="86271">MMDQARSAFSTLFGGEPLSYTRFSLARQVDGDNSHVEMKLAADEEENVDNNMRDNGASVTKPKRFNGFICYGTIAIILFFLIGFMIGYLGYCKRVEAKSECERPAGTESLEVEGTEPSETEEYFPEAPSHLFWSDLKTMLSEKLSNTEFTSTIRQLNENSYFPREAGSQKDESLAFFIENRFRELQLSKAWHDEHFVKVQVKGSASNSVTIVGTNSGMVYLVESPEGYVAYSKAATVTGRLVHANFGTKKDFENLNSPVNGSLVIVRAGKITFAEKVANAESFNAIGVLIYMDQAKFPITNAEIPFFGHAHLGTGDPYTPGFPSFNHTQFPPSQSSGLPNIPVQTISRANAEKLFGNMEGDCPSAWETDSSCRLETSRNWNVKLSVNNVLKEIRIFNVFGVIKGFEEPDHYVVVGAQRDAWGPGAAKSSVGTALLLELARILSDMVLKGGFKPSRSIVFASWSAGDFGAVGATEWLEGYLSSLHLKAFTYINLDKAVLGTSNFKVSASPLLYSLIEKVMKDVKHPVTGQSLYRDSNWINKVEKFSLDNAAFPFLAYSGIPAVSFCFCEDTDYPYLGTTMDVYEKLIQKVPQLNKMARAAAEVAGQLIMKLTYDLELNLNYEMYNDKILSFVRDVSRFRADIKEMGLNLQWLYSARGDFFRATSRLTTDYRNAERTNRFIMRDINDRIMRVEYHFLSPYVSPRESPFRHIFWGTGSHTLSALLEHLKLRQENISAFNETLFRNQLALTTWTIQGAANALSGDIWDIDNEF</sequence>
<dbReference type="EMBL" id="AF276984">
    <property type="protein sequence ID" value="AAF81908.1"/>
    <property type="molecule type" value="mRNA"/>
</dbReference>
<dbReference type="RefSeq" id="NP_001009312.1">
    <property type="nucleotide sequence ID" value="NM_001009312.1"/>
</dbReference>
<dbReference type="SMR" id="Q9MYZ3"/>
<dbReference type="FunCoup" id="Q9MYZ3">
    <property type="interactions" value="72"/>
</dbReference>
<dbReference type="STRING" id="9685.ENSFCAP00000033833"/>
<dbReference type="MEROPS" id="M28.972"/>
<dbReference type="GlyCosmos" id="Q9MYZ3">
    <property type="glycosylation" value="5 sites, No reported glycans"/>
</dbReference>
<dbReference type="PaxDb" id="9685-ENSFCAP00000003404"/>
<dbReference type="GeneID" id="493880"/>
<dbReference type="KEGG" id="fca:493880"/>
<dbReference type="CTD" id="7037"/>
<dbReference type="eggNOG" id="KOG2195">
    <property type="taxonomic scope" value="Eukaryota"/>
</dbReference>
<dbReference type="InParanoid" id="Q9MYZ3"/>
<dbReference type="OrthoDB" id="5841748at2759"/>
<dbReference type="Proteomes" id="UP000011712">
    <property type="component" value="Unplaced"/>
</dbReference>
<dbReference type="GO" id="GO:0009897">
    <property type="term" value="C:external side of plasma membrane"/>
    <property type="evidence" value="ECO:0000318"/>
    <property type="project" value="GO_Central"/>
</dbReference>
<dbReference type="GO" id="GO:0042470">
    <property type="term" value="C:melanosome"/>
    <property type="evidence" value="ECO:0007669"/>
    <property type="project" value="UniProtKB-SubCell"/>
</dbReference>
<dbReference type="GO" id="GO:0004998">
    <property type="term" value="F:transferrin receptor activity"/>
    <property type="evidence" value="ECO:0000250"/>
    <property type="project" value="UniProtKB"/>
</dbReference>
<dbReference type="GO" id="GO:0006879">
    <property type="term" value="P:intracellular iron ion homeostasis"/>
    <property type="evidence" value="ECO:0000318"/>
    <property type="project" value="GO_Central"/>
</dbReference>
<dbReference type="GO" id="GO:0006826">
    <property type="term" value="P:iron ion transport"/>
    <property type="evidence" value="ECO:0000318"/>
    <property type="project" value="GO_Central"/>
</dbReference>
<dbReference type="GO" id="GO:0030890">
    <property type="term" value="P:positive regulation of B cell proliferation"/>
    <property type="evidence" value="ECO:0000250"/>
    <property type="project" value="UniProtKB"/>
</dbReference>
<dbReference type="GO" id="GO:0045830">
    <property type="term" value="P:positive regulation of isotype switching"/>
    <property type="evidence" value="ECO:0000250"/>
    <property type="project" value="UniProtKB"/>
</dbReference>
<dbReference type="GO" id="GO:0042102">
    <property type="term" value="P:positive regulation of T cell proliferation"/>
    <property type="evidence" value="ECO:0000250"/>
    <property type="project" value="UniProtKB"/>
</dbReference>
<dbReference type="GO" id="GO:0031623">
    <property type="term" value="P:receptor internalization"/>
    <property type="evidence" value="ECO:0000250"/>
    <property type="project" value="UniProtKB"/>
</dbReference>
<dbReference type="GO" id="GO:0033572">
    <property type="term" value="P:transferrin transport"/>
    <property type="evidence" value="ECO:0000250"/>
    <property type="project" value="UniProtKB"/>
</dbReference>
<dbReference type="CDD" id="cd09848">
    <property type="entry name" value="M28_TfR"/>
    <property type="match status" value="1"/>
</dbReference>
<dbReference type="CDD" id="cd02128">
    <property type="entry name" value="PA_TfR"/>
    <property type="match status" value="1"/>
</dbReference>
<dbReference type="FunFam" id="1.20.930.40:FF:000002">
    <property type="entry name" value="Transferrin receptor protein 1"/>
    <property type="match status" value="1"/>
</dbReference>
<dbReference type="FunFam" id="3.40.630.10:FF:000045">
    <property type="entry name" value="Transferrin receptor protein 1"/>
    <property type="match status" value="1"/>
</dbReference>
<dbReference type="FunFam" id="3.50.30.30:FF:000010">
    <property type="entry name" value="Transferrin receptor protein 1"/>
    <property type="match status" value="1"/>
</dbReference>
<dbReference type="Gene3D" id="3.50.30.30">
    <property type="match status" value="1"/>
</dbReference>
<dbReference type="Gene3D" id="1.20.930.40">
    <property type="entry name" value="Transferrin receptor-like, dimerisation domain"/>
    <property type="match status" value="1"/>
</dbReference>
<dbReference type="Gene3D" id="3.40.630.10">
    <property type="entry name" value="Zn peptidases"/>
    <property type="match status" value="1"/>
</dbReference>
<dbReference type="InterPro" id="IPR046450">
    <property type="entry name" value="PA_dom_sf"/>
</dbReference>
<dbReference type="InterPro" id="IPR003137">
    <property type="entry name" value="PA_domain"/>
</dbReference>
<dbReference type="InterPro" id="IPR007484">
    <property type="entry name" value="Peptidase_M28"/>
</dbReference>
<dbReference type="InterPro" id="IPR039373">
    <property type="entry name" value="Peptidase_M28B"/>
</dbReference>
<dbReference type="InterPro" id="IPR007365">
    <property type="entry name" value="TFR-like_dimer_dom"/>
</dbReference>
<dbReference type="InterPro" id="IPR036757">
    <property type="entry name" value="TFR-like_dimer_dom_sf"/>
</dbReference>
<dbReference type="InterPro" id="IPR037324">
    <property type="entry name" value="TfR1/2_PA"/>
</dbReference>
<dbReference type="PANTHER" id="PTHR10404">
    <property type="entry name" value="N-ACETYLATED-ALPHA-LINKED ACIDIC DIPEPTIDASE"/>
    <property type="match status" value="1"/>
</dbReference>
<dbReference type="PANTHER" id="PTHR10404:SF26">
    <property type="entry name" value="TRANSFERRIN RECEPTOR PROTEIN 1"/>
    <property type="match status" value="1"/>
</dbReference>
<dbReference type="Pfam" id="PF02225">
    <property type="entry name" value="PA"/>
    <property type="match status" value="1"/>
</dbReference>
<dbReference type="Pfam" id="PF04389">
    <property type="entry name" value="Peptidase_M28"/>
    <property type="match status" value="1"/>
</dbReference>
<dbReference type="Pfam" id="PF04253">
    <property type="entry name" value="TFR_dimer"/>
    <property type="match status" value="1"/>
</dbReference>
<dbReference type="SUPFAM" id="SSF52025">
    <property type="entry name" value="PA domain"/>
    <property type="match status" value="1"/>
</dbReference>
<dbReference type="SUPFAM" id="SSF47672">
    <property type="entry name" value="Transferrin receptor-like dimerisation domain"/>
    <property type="match status" value="1"/>
</dbReference>
<dbReference type="SUPFAM" id="SSF53187">
    <property type="entry name" value="Zn-dependent exopeptidases"/>
    <property type="match status" value="1"/>
</dbReference>
<proteinExistence type="evidence at protein level"/>
<reference key="1">
    <citation type="journal article" date="2001" name="J. Virol.">
        <title>Canine and feline parvoviruses can use human or feline transferrin receptors to bind, enter, and infect cells.</title>
        <authorList>
            <person name="Parker J.S.L."/>
            <person name="Murphy W.J."/>
            <person name="Wang D."/>
            <person name="O'Brien S.J."/>
            <person name="Parrish C.R."/>
        </authorList>
    </citation>
    <scope>NUCLEOTIDE SEQUENCE [MRNA]</scope>
    <source>
        <tissue>Liver</tissue>
    </source>
</reference>
<reference key="2">
    <citation type="journal article" date="2009" name="J. Virol.">
        <title>Early steps in cell infection by parvoviruses: host-specific differences in cell receptor binding but similar endosomal trafficking.</title>
        <authorList>
            <person name="Harbison C.E."/>
            <person name="Lyi S.M."/>
            <person name="Weichert W.S."/>
            <person name="Parrish C.R."/>
        </authorList>
    </citation>
    <scope>INTERACTION WITH FELINE PANLEUKOPENIA VIRUS CAPSID PROTEINS</scope>
</reference>
<protein>
    <recommendedName>
        <fullName>Transferrin receptor protein 1</fullName>
        <shortName>TR</shortName>
        <shortName>TfR</shortName>
        <shortName>TfR1</shortName>
        <shortName>Trfr</shortName>
    </recommendedName>
    <cdAntigenName>CD71</cdAntigenName>
</protein>
<evidence type="ECO:0000250" key="1"/>
<evidence type="ECO:0000250" key="2">
    <source>
        <dbReference type="UniProtKB" id="P02786"/>
    </source>
</evidence>
<evidence type="ECO:0000250" key="3">
    <source>
        <dbReference type="UniProtKB" id="Q62351"/>
    </source>
</evidence>
<evidence type="ECO:0000255" key="4"/>
<evidence type="ECO:0000305" key="5"/>
<feature type="chain" id="PRO_0000174131" description="Transferrin receptor protein 1">
    <location>
        <begin position="1"/>
        <end position="769"/>
    </location>
</feature>
<feature type="topological domain" description="Cytoplasmic" evidence="4">
    <location>
        <begin position="1"/>
        <end position="70"/>
    </location>
</feature>
<feature type="transmembrane region" description="Helical; Signal-anchor for type II membrane protein" evidence="4">
    <location>
        <begin position="71"/>
        <end position="91"/>
    </location>
</feature>
<feature type="topological domain" description="Extracellular" evidence="4">
    <location>
        <begin position="92"/>
        <end position="769"/>
    </location>
</feature>
<feature type="domain" description="PA">
    <location>
        <begin position="232"/>
        <end position="322"/>
    </location>
</feature>
<feature type="region of interest" description="Mediates interaction with SH3BP4" evidence="1">
    <location>
        <begin position="1"/>
        <end position="70"/>
    </location>
</feature>
<feature type="region of interest" description="Ligand-binding" evidence="1">
    <location>
        <begin position="578"/>
        <end position="769"/>
    </location>
</feature>
<feature type="short sequence motif" description="Endocytosis signal">
    <location>
        <begin position="20"/>
        <end position="23"/>
    </location>
</feature>
<feature type="short sequence motif" description="Stop-transfer sequence">
    <location>
        <begin position="61"/>
        <end position="64"/>
    </location>
</feature>
<feature type="short sequence motif" description="Cell attachment site" evidence="4">
    <location>
        <begin position="655"/>
        <end position="657"/>
    </location>
</feature>
<feature type="modified residue" description="Phosphoserine" evidence="2">
    <location>
        <position position="10"/>
    </location>
</feature>
<feature type="modified residue" description="Phosphoserine" evidence="3">
    <location>
        <position position="19"/>
    </location>
</feature>
<feature type="modified residue" description="Phosphotyrosine" evidence="2">
    <location>
        <position position="20"/>
    </location>
</feature>
<feature type="modified residue" description="Phosphothreonine" evidence="2">
    <location>
        <position position="21"/>
    </location>
</feature>
<feature type="modified residue" description="Phosphoserine" evidence="2">
    <location>
        <position position="24"/>
    </location>
</feature>
<feature type="lipid moiety-binding region" description="S-palmitoyl cysteine" evidence="1">
    <location>
        <position position="70"/>
    </location>
</feature>
<feature type="glycosylation site" description="O-linked (GalNAc...) threonine" evidence="1">
    <location>
        <position position="107"/>
    </location>
</feature>
<feature type="glycosylation site" description="N-linked (GlcNAc...) asparagine" evidence="2">
    <location>
        <position position="260"/>
    </location>
</feature>
<feature type="glycosylation site" description="N-linked (GlcNAc...) asparagine" evidence="2">
    <location>
        <position position="326"/>
    </location>
</feature>
<feature type="glycosylation site" description="N-linked (GlcNAc...) asparagine" evidence="4">
    <location>
        <position position="731"/>
    </location>
</feature>
<feature type="glycosylation site" description="N-linked (GlcNAc...) asparagine" evidence="2">
    <location>
        <position position="736"/>
    </location>
</feature>
<feature type="disulfide bond" description="Interchain" evidence="1">
    <location>
        <position position="92"/>
    </location>
</feature>
<feature type="disulfide bond" description="Interchain" evidence="1">
    <location>
        <position position="101"/>
    </location>
</feature>
<comment type="function">
    <text evidence="2 3">Cellular uptake of iron occurs via receptor-mediated endocytosis of ligand-occupied transferrin receptor into specialized endosomes (By similarity). Endosomal acidification leads to iron release. The apotransferrin-receptor complex is then recycled to the cell surface with a return to neutral pH and the concomitant loss of affinity of apotransferrin for its receptor. Transferrin receptor is necessary for development of erythrocytes and the nervous system (By similarity). Positively regulates T and B cell proliferation through iron uptake (By similarity). Acts as a lipid sensor that regulates mitochondrial fusion by regulating activation of the JNK pathway (By similarity). When dietary levels of stearate (C18:0) are low, promotes activation of the JNK pathway, resulting in HUWE1-mediated ubiquitination and subsequent degradation of the mitofusin MFN2 and inhibition of mitochondrial fusion (By similarity). When dietary levels of stearate (C18:0) are high, TFRC stearoylation inhibits activation of the JNK pathway and thus degradation of the mitofusin MFN2 (By similarity). Mediates uptake of NICOL1 into fibroblasts where it may regulate extracellular matrix production (By similarity).</text>
</comment>
<comment type="subunit">
    <text evidence="1 2">Homodimer; disulfide-linked. Binds one transferrin molecule per subunit. Interacts with SH3BP4 (By similarity). Homodimer; disulfide-linked. Binds one transferrin or HFE molecule per subunit. Binds the HLA class II histocompatibility antigen, DR1. Interacts with SH3BP3. Interacts with STEAP3; facilitates TFRC endocytosis in erythroid precursor cells (By similarity).</text>
</comment>
<comment type="subcellular location">
    <subcellularLocation>
        <location evidence="2">Cell membrane</location>
        <topology evidence="2">Single-pass type II membrane protein</topology>
    </subcellularLocation>
    <subcellularLocation>
        <location evidence="2">Melanosome</location>
    </subcellularLocation>
</comment>
<comment type="domain">
    <text>The YTRF endocytosis motif engages the clathrin-mediated endocytic machinery through adapter protein-2.</text>
</comment>
<comment type="PTM">
    <text evidence="2">Stearoylated by ZDHHC6 which inhibits TFRC-mediated activation of the JNK pathway and promotes mitochondrial fragmentation (By similarity). Stearoylation does not affect iron uptake (By similarity).</text>
</comment>
<comment type="PTM">
    <text evidence="1">N- and O-glycosylated, phosphorylated and palmitoylated.</text>
</comment>
<comment type="miscellaneous">
    <text>Canine and feline parvoviruses bind human and feline transferrin receptors and use these receptors to enter and infect cells.</text>
</comment>
<comment type="similarity">
    <text evidence="5">Belongs to the peptidase M28 family. M28B subfamily.</text>
</comment>
<organism>
    <name type="scientific">Felis catus</name>
    <name type="common">Cat</name>
    <name type="synonym">Felis silvestris catus</name>
    <dbReference type="NCBI Taxonomy" id="9685"/>
    <lineage>
        <taxon>Eukaryota</taxon>
        <taxon>Metazoa</taxon>
        <taxon>Chordata</taxon>
        <taxon>Craniata</taxon>
        <taxon>Vertebrata</taxon>
        <taxon>Euteleostomi</taxon>
        <taxon>Mammalia</taxon>
        <taxon>Eutheria</taxon>
        <taxon>Laurasiatheria</taxon>
        <taxon>Carnivora</taxon>
        <taxon>Feliformia</taxon>
        <taxon>Felidae</taxon>
        <taxon>Felinae</taxon>
        <taxon>Felis</taxon>
    </lineage>
</organism>
<keyword id="KW-1003">Cell membrane</keyword>
<keyword id="KW-1015">Disulfide bond</keyword>
<keyword id="KW-0254">Endocytosis</keyword>
<keyword id="KW-0325">Glycoprotein</keyword>
<keyword id="KW-0945">Host-virus interaction</keyword>
<keyword id="KW-0449">Lipoprotein</keyword>
<keyword id="KW-0472">Membrane</keyword>
<keyword id="KW-0564">Palmitate</keyword>
<keyword id="KW-0597">Phosphoprotein</keyword>
<keyword id="KW-0675">Receptor</keyword>
<keyword id="KW-1185">Reference proteome</keyword>
<keyword id="KW-0735">Signal-anchor</keyword>
<keyword id="KW-0812">Transmembrane</keyword>
<keyword id="KW-1133">Transmembrane helix</keyword>
<name>TFR1_FELCA</name>